<sequence length="95" mass="10413">MTMKTLCLSLIVIGVLILVAVKAEDYVNINSLEEAPEENVNINNLEETPEESRCIQRHRSCRKSSECCGCSVCQCNLFGQNCQCKSGGLIACGKK</sequence>
<comment type="function">
    <text evidence="2">This recombinant (non-amidated) toxin shows insecticidal activity on larvae of the housefly Musca domestica and has no activity on a panel of expressed neuronal receptors and ion channels.</text>
</comment>
<comment type="subcellular location">
    <subcellularLocation>
        <location evidence="2">Secreted</location>
    </subcellularLocation>
</comment>
<comment type="tissue specificity">
    <text evidence="5">Expressed by the venom gland.</text>
</comment>
<comment type="domain">
    <text evidence="4">The presence of a 'disulfide through disulfide knot' structurally defines this protein as a knottin.</text>
</comment>
<comment type="mass spectrometry" mass="4200.71" method="Electrospray" evidence="2">
    <text>Monoisotopic mass.</text>
</comment>
<comment type="toxic dose">
    <text evidence="2">LD(100) is 200 ug/g when the recombinant non-amidated toxin is tested on larvae of the housefly Musca domestica.</text>
</comment>
<comment type="miscellaneous">
    <text evidence="2">Negative results: does not show effect on transient receptor potential cation channels (rTRPV1, mTRPV2, hTRPV3, and rTRPA1). Does not show effect and insect and arachnid sodium channels (BgNav, DmNav, and VdNav), as well as on mammals sodium channels (Nav1.4/SCN4A, Nav1.6/SCN8A, and Nav1.7/SCN9A). Does not show effect on insect and mammal potassium channels (Shaker, Kv1.1/KCNA1, Kv1.2/KCNA2, Kv1.3/KCNA3, Kv1.4/KCNA4, Kv1.5/KCNA5, Kv1.6/KCNA8, Kv2.1/KCNB1, Kv3.1/KCNC1, Kv4.3/KCND3, and Kv10.1/KCNH1), and on calcium channels Cav3.1/CACNA1G.</text>
</comment>
<comment type="similarity">
    <text evidence="4">Belongs to the neurotoxin 02 (plectoxin) family. 02 (plectoxin) subfamily.</text>
</comment>
<dbReference type="PDB" id="7AY8">
    <property type="method" value="NMR"/>
    <property type="chains" value="A=54-92"/>
</dbReference>
<dbReference type="PDBsum" id="7AY8"/>
<dbReference type="SMR" id="P0DQP5"/>
<dbReference type="GO" id="GO:0005576">
    <property type="term" value="C:extracellular region"/>
    <property type="evidence" value="ECO:0007669"/>
    <property type="project" value="UniProtKB-SubCell"/>
</dbReference>
<dbReference type="GO" id="GO:0005102">
    <property type="term" value="F:signaling receptor binding"/>
    <property type="evidence" value="ECO:0007669"/>
    <property type="project" value="InterPro"/>
</dbReference>
<dbReference type="Gene3D" id="4.10.760.10">
    <property type="entry name" value="Agouti domain"/>
    <property type="match status" value="1"/>
</dbReference>
<dbReference type="InterPro" id="IPR036836">
    <property type="entry name" value="Agouti_dom_sf"/>
</dbReference>
<accession>P0DQP5</accession>
<reference key="1">
    <citation type="journal article" date="2021" name="Toxins">
        <title>New Insectotoxin from Tibellus Oblongus Spider Venom Presents Novel Adaptation of ICK Fold.</title>
        <authorList>
            <person name="Korolkova Y."/>
            <person name="Maleeva E."/>
            <person name="Mikov A."/>
            <person name="Lobas A."/>
            <person name="Solovyeva E."/>
            <person name="Gorshkov M."/>
            <person name="Andreev Y."/>
            <person name="Peigneur S."/>
            <person name="Tytgat J."/>
            <person name="Kornilov F."/>
            <person name="Lushpa V."/>
            <person name="Mineev K."/>
            <person name="Kozlov S."/>
        </authorList>
    </citation>
    <scope>NUCLEOTIDE SEQUENCE [MRNA]</scope>
    <scope>PROTEIN SEQUENCE OF 63-92</scope>
    <scope>FUNCTION</scope>
    <scope>RECOMBINANT EXPRESSION</scope>
    <scope>TOXIC DOSE</scope>
    <scope>MASS SPECTROMETRY</scope>
    <scope>AMIDATION AT CYS-92</scope>
    <scope>STRUCTURE BY NMR OF 63-92</scope>
    <source>
        <tissue>Venom</tissue>
        <tissue>Venom gland</tissue>
    </source>
</reference>
<name>TBO2_TIBOB</name>
<feature type="signal peptide" evidence="1">
    <location>
        <begin position="1"/>
        <end position="23"/>
    </location>
</feature>
<feature type="propeptide" id="PRO_0000452714" evidence="5">
    <location>
        <begin position="24"/>
        <end position="53"/>
    </location>
</feature>
<feature type="chain" id="PRO_0000452715" description="Toxin Tbo-IT2" evidence="2">
    <location>
        <begin position="54"/>
        <end position="92"/>
    </location>
</feature>
<feature type="modified residue" description="Cysteine amide" evidence="2">
    <location>
        <position position="92"/>
    </location>
</feature>
<feature type="disulfide bond" evidence="2 6">
    <location>
        <begin position="54"/>
        <end position="68"/>
    </location>
</feature>
<feature type="disulfide bond" evidence="2 6">
    <location>
        <begin position="61"/>
        <end position="73"/>
    </location>
</feature>
<feature type="disulfide bond" evidence="2 6">
    <location>
        <begin position="67"/>
        <end position="84"/>
    </location>
</feature>
<feature type="disulfide bond" evidence="2 6">
    <location>
        <begin position="70"/>
        <end position="92"/>
    </location>
</feature>
<feature type="disulfide bond" evidence="2 6">
    <location>
        <begin position="75"/>
        <end position="82"/>
    </location>
</feature>
<organism>
    <name type="scientific">Tibellus oblongus</name>
    <name type="common">Oblong running crab spider</name>
    <dbReference type="NCBI Taxonomy" id="336685"/>
    <lineage>
        <taxon>Eukaryota</taxon>
        <taxon>Metazoa</taxon>
        <taxon>Ecdysozoa</taxon>
        <taxon>Arthropoda</taxon>
        <taxon>Chelicerata</taxon>
        <taxon>Arachnida</taxon>
        <taxon>Araneae</taxon>
        <taxon>Araneomorphae</taxon>
        <taxon>Entelegynae</taxon>
        <taxon>Dionycha</taxon>
        <taxon>Philodromidae</taxon>
        <taxon>Tibellus</taxon>
    </lineage>
</organism>
<evidence type="ECO:0000255" key="1"/>
<evidence type="ECO:0000269" key="2">
    <source>
    </source>
</evidence>
<evidence type="ECO:0000303" key="3">
    <source>
    </source>
</evidence>
<evidence type="ECO:0000305" key="4"/>
<evidence type="ECO:0000305" key="5">
    <source>
    </source>
</evidence>
<evidence type="ECO:0007744" key="6">
    <source>
        <dbReference type="PDB" id="7AY8"/>
    </source>
</evidence>
<keyword id="KW-0002">3D-structure</keyword>
<keyword id="KW-0027">Amidation</keyword>
<keyword id="KW-0903">Direct protein sequencing</keyword>
<keyword id="KW-1015">Disulfide bond</keyword>
<keyword id="KW-0964">Secreted</keyword>
<keyword id="KW-0732">Signal</keyword>
<protein>
    <recommendedName>
        <fullName evidence="3">Toxin Tbo-IT2</fullName>
    </recommendedName>
</protein>
<proteinExistence type="evidence at protein level"/>